<keyword id="KW-1015">Disulfide bond</keyword>
<keyword id="KW-0325">Glycoprotein</keyword>
<keyword id="KW-0378">Hydrolase</keyword>
<keyword id="KW-0479">Metal-binding</keyword>
<keyword id="KW-1185">Reference proteome</keyword>
<keyword id="KW-0964">Secreted</keyword>
<keyword id="KW-0732">Signal</keyword>
<keyword id="KW-0862">Zinc</keyword>
<sequence length="503" mass="57506">MHVLFLGDLMWIYLLLLCCASCNGRPDPRKRDALIGLEASRRTGGDITLNEREKLLDGKLQKLKQHDMEAGQFPPSMHFFKAKRLIDQSPVFNLIQKMPKGAALHVHDFAMVSVDWLVKNVTYRENCYVCFTDKQTVQFIFSSGPPASSSYCSSWTLLRSLREKIKNTTELDNSFIRNLTLFTEDPDRAYPNQDTVWERFEQVFLVAYGLVTYAPVFKDYLYEGLRQFYEDNIMYVEIRALLPQTYELDGRLNDKDWSMAACQEVVNQFKKHHPDFIGARVIFTVHRKINATEAVKTVEEAMILRRNFPDVMAGFDFVGQEDLGRPLWYFKDALSLPEDKGFNLPYFFHAGETDSQGTDVDQNLMDALLFNTTRIGHGFALARHPVVKEMARKMDVPIEVCPISNQVLKLVSDLRDHPAAVLMAEGHPLVISSDDPAVFGATALSHDFYEAFMGFGGMSFNLGTLKELALNSLRYSTLPSQRKEEAIDALLVKWDKFVWESLL</sequence>
<organism>
    <name type="scientific">Danio rerio</name>
    <name type="common">Zebrafish</name>
    <name type="synonym">Brachydanio rerio</name>
    <dbReference type="NCBI Taxonomy" id="7955"/>
    <lineage>
        <taxon>Eukaryota</taxon>
        <taxon>Metazoa</taxon>
        <taxon>Chordata</taxon>
        <taxon>Craniata</taxon>
        <taxon>Vertebrata</taxon>
        <taxon>Euteleostomi</taxon>
        <taxon>Actinopterygii</taxon>
        <taxon>Neopterygii</taxon>
        <taxon>Teleostei</taxon>
        <taxon>Ostariophysi</taxon>
        <taxon>Cypriniformes</taxon>
        <taxon>Danionidae</taxon>
        <taxon>Danioninae</taxon>
        <taxon>Danio</taxon>
    </lineage>
</organism>
<feature type="signal peptide" evidence="3">
    <location>
        <begin position="1"/>
        <end position="24"/>
    </location>
</feature>
<feature type="chain" id="PRO_0000006727" description="Adenosine deaminase 2-A">
    <location>
        <begin position="25"/>
        <end position="503"/>
    </location>
</feature>
<feature type="active site" description="Proton donor" evidence="1">
    <location>
        <position position="352"/>
    </location>
</feature>
<feature type="active site" description="Proton acceptor" evidence="1">
    <location>
        <position position="377"/>
    </location>
</feature>
<feature type="binding site" evidence="1">
    <location>
        <position position="105"/>
    </location>
    <ligand>
        <name>Zn(2+)</name>
        <dbReference type="ChEBI" id="CHEBI:29105"/>
        <note>catalytic</note>
    </ligand>
</feature>
<feature type="binding site" evidence="1">
    <location>
        <position position="107"/>
    </location>
    <ligand>
        <name>Zn(2+)</name>
        <dbReference type="ChEBI" id="CHEBI:29105"/>
        <note>catalytic</note>
    </ligand>
</feature>
<feature type="binding site" evidence="1">
    <location>
        <position position="108"/>
    </location>
    <ligand>
        <name>substrate</name>
    </ligand>
</feature>
<feature type="binding site" evidence="1">
    <location>
        <begin position="197"/>
        <end position="204"/>
    </location>
    <ligand>
        <name>substrate</name>
    </ligand>
</feature>
<feature type="binding site" evidence="1">
    <location>
        <position position="286"/>
    </location>
    <ligand>
        <name>substrate</name>
    </ligand>
</feature>
<feature type="binding site" evidence="1">
    <location>
        <position position="319"/>
    </location>
    <ligand>
        <name>substrate</name>
    </ligand>
</feature>
<feature type="binding site" evidence="1">
    <location>
        <position position="349"/>
    </location>
    <ligand>
        <name>Zn(2+)</name>
        <dbReference type="ChEBI" id="CHEBI:29105"/>
        <note>catalytic</note>
    </ligand>
</feature>
<feature type="binding site" evidence="1">
    <location>
        <position position="434"/>
    </location>
    <ligand>
        <name>Zn(2+)</name>
        <dbReference type="ChEBI" id="CHEBI:29105"/>
        <note>catalytic</note>
    </ligand>
</feature>
<feature type="binding site" evidence="1">
    <location>
        <position position="435"/>
    </location>
    <ligand>
        <name>substrate</name>
    </ligand>
</feature>
<feature type="glycosylation site" description="N-linked (GlcNAc...) asparagine" evidence="3">
    <location>
        <position position="120"/>
    </location>
</feature>
<feature type="glycosylation site" description="N-linked (GlcNAc...) asparagine" evidence="3">
    <location>
        <position position="167"/>
    </location>
</feature>
<feature type="glycosylation site" description="N-linked (GlcNAc...) asparagine" evidence="3">
    <location>
        <position position="178"/>
    </location>
</feature>
<feature type="glycosylation site" description="N-linked (GlcNAc...) asparagine" evidence="3">
    <location>
        <position position="290"/>
    </location>
</feature>
<feature type="glycosylation site" description="N-linked (GlcNAc...) asparagine" evidence="3">
    <location>
        <position position="371"/>
    </location>
</feature>
<feature type="disulfide bond" evidence="1">
    <location>
        <begin position="130"/>
        <end position="152"/>
    </location>
</feature>
<feature type="sequence conflict" description="In Ref. 1; AAL40922." evidence="4" ref="1">
    <original>Y</original>
    <variation>H</variation>
    <location>
        <position position="151"/>
    </location>
</feature>
<feature type="sequence conflict" description="In Ref. 1; AAL40922." evidence="4" ref="1">
    <original>D</original>
    <variation>Y</variation>
    <location>
        <position position="395"/>
    </location>
</feature>
<feature type="sequence conflict" description="In Ref. 1; AAL40922." evidence="4" ref="1">
    <original>P</original>
    <variation>S</variation>
    <location>
        <position position="479"/>
    </location>
</feature>
<protein>
    <recommendedName>
        <fullName evidence="2">Adenosine deaminase 2-A</fullName>
        <ecNumber evidence="2">3.5.4.4</ecNumber>
    </recommendedName>
    <alternativeName>
        <fullName>Cat eye syndrome critical region protein 1 homolog A</fullName>
    </alternativeName>
</protein>
<dbReference type="EC" id="3.5.4.4" evidence="2"/>
<dbReference type="EMBL" id="AF384217">
    <property type="protein sequence ID" value="AAL40922.1"/>
    <property type="molecule type" value="mRNA"/>
</dbReference>
<dbReference type="EMBL" id="BC045839">
    <property type="protein sequence ID" value="AAH45839.1"/>
    <property type="molecule type" value="mRNA"/>
</dbReference>
<dbReference type="RefSeq" id="NP_001028889.2">
    <property type="nucleotide sequence ID" value="NM_001033717.2"/>
</dbReference>
<dbReference type="SMR" id="P58781"/>
<dbReference type="FunCoup" id="P58781">
    <property type="interactions" value="302"/>
</dbReference>
<dbReference type="STRING" id="7955.ENSDARP00000067907"/>
<dbReference type="GlyCosmos" id="P58781">
    <property type="glycosylation" value="5 sites, No reported glycans"/>
</dbReference>
<dbReference type="PaxDb" id="7955-ENSDARP00000067907"/>
<dbReference type="GeneID" id="373884"/>
<dbReference type="KEGG" id="dre:373884"/>
<dbReference type="AGR" id="ZFIN:ZDB-GENE-030902-4"/>
<dbReference type="CTD" id="373884"/>
<dbReference type="ZFIN" id="ZDB-GENE-030902-4">
    <property type="gene designation" value="ada2a"/>
</dbReference>
<dbReference type="eggNOG" id="KOG1097">
    <property type="taxonomic scope" value="Eukaryota"/>
</dbReference>
<dbReference type="InParanoid" id="P58781"/>
<dbReference type="OrthoDB" id="7202371at2759"/>
<dbReference type="PhylomeDB" id="P58781"/>
<dbReference type="Reactome" id="R-DRE-5683826">
    <property type="pathway name" value="Surfactant metabolism"/>
</dbReference>
<dbReference type="Reactome" id="R-DRE-6798695">
    <property type="pathway name" value="Neutrophil degranulation"/>
</dbReference>
<dbReference type="PRO" id="PR:P58781"/>
<dbReference type="Proteomes" id="UP000000437">
    <property type="component" value="Chromosome 25"/>
</dbReference>
<dbReference type="GO" id="GO:0005615">
    <property type="term" value="C:extracellular space"/>
    <property type="evidence" value="ECO:0000250"/>
    <property type="project" value="UniProtKB"/>
</dbReference>
<dbReference type="GO" id="GO:0004000">
    <property type="term" value="F:adenosine deaminase activity"/>
    <property type="evidence" value="ECO:0000250"/>
    <property type="project" value="UniProtKB"/>
</dbReference>
<dbReference type="GO" id="GO:0031685">
    <property type="term" value="F:adenosine receptor binding"/>
    <property type="evidence" value="ECO:0000250"/>
    <property type="project" value="UniProtKB"/>
</dbReference>
<dbReference type="GO" id="GO:0043394">
    <property type="term" value="F:proteoglycan binding"/>
    <property type="evidence" value="ECO:0000250"/>
    <property type="project" value="UniProtKB"/>
</dbReference>
<dbReference type="GO" id="GO:0008270">
    <property type="term" value="F:zinc ion binding"/>
    <property type="evidence" value="ECO:0000250"/>
    <property type="project" value="UniProtKB"/>
</dbReference>
<dbReference type="GO" id="GO:0006154">
    <property type="term" value="P:adenosine catabolic process"/>
    <property type="evidence" value="ECO:0000250"/>
    <property type="project" value="UniProtKB"/>
</dbReference>
<dbReference type="GO" id="GO:0046103">
    <property type="term" value="P:inosine biosynthetic process"/>
    <property type="evidence" value="ECO:0000318"/>
    <property type="project" value="GO_Central"/>
</dbReference>
<dbReference type="CDD" id="cd01321">
    <property type="entry name" value="ADGF"/>
    <property type="match status" value="1"/>
</dbReference>
<dbReference type="FunFam" id="3.20.20.140:FF:000017">
    <property type="entry name" value="Adenosine deaminase 2"/>
    <property type="match status" value="1"/>
</dbReference>
<dbReference type="Gene3D" id="3.20.20.140">
    <property type="entry name" value="Metal-dependent hydrolases"/>
    <property type="match status" value="1"/>
</dbReference>
<dbReference type="InterPro" id="IPR001365">
    <property type="entry name" value="A_deaminase_dom"/>
</dbReference>
<dbReference type="InterPro" id="IPR013659">
    <property type="entry name" value="A_deaminase_N"/>
</dbReference>
<dbReference type="InterPro" id="IPR006331">
    <property type="entry name" value="ADGF"/>
</dbReference>
<dbReference type="InterPro" id="IPR006330">
    <property type="entry name" value="Ado/ade_deaminase"/>
</dbReference>
<dbReference type="InterPro" id="IPR032466">
    <property type="entry name" value="Metal_Hydrolase"/>
</dbReference>
<dbReference type="NCBIfam" id="TIGR01431">
    <property type="entry name" value="adm_rel"/>
    <property type="match status" value="1"/>
</dbReference>
<dbReference type="PANTHER" id="PTHR11409">
    <property type="entry name" value="ADENOSINE DEAMINASE"/>
    <property type="match status" value="1"/>
</dbReference>
<dbReference type="PANTHER" id="PTHR11409:SF45">
    <property type="entry name" value="ADENOSINE DEAMINASE 2-A"/>
    <property type="match status" value="1"/>
</dbReference>
<dbReference type="Pfam" id="PF00962">
    <property type="entry name" value="A_deaminase"/>
    <property type="match status" value="1"/>
</dbReference>
<dbReference type="Pfam" id="PF08451">
    <property type="entry name" value="A_deaminase_N"/>
    <property type="match status" value="1"/>
</dbReference>
<dbReference type="SUPFAM" id="SSF51556">
    <property type="entry name" value="Metallo-dependent hydrolases"/>
    <property type="match status" value="1"/>
</dbReference>
<reference key="1">
    <citation type="journal article" date="2001" name="Gene">
        <title>Characterization of the adenosine deaminase-related growth factor (ADGF) gene family in Drosophila.</title>
        <authorList>
            <person name="Maier S.A."/>
            <person name="Podemski L."/>
            <person name="Graham S.W."/>
            <person name="McDermid H.E."/>
            <person name="Locke J."/>
        </authorList>
    </citation>
    <scope>NUCLEOTIDE SEQUENCE [MRNA]</scope>
</reference>
<reference key="2">
    <citation type="submission" date="2003-01" db="EMBL/GenBank/DDBJ databases">
        <authorList>
            <consortium name="NIH - Zebrafish Gene Collection (ZGC) project"/>
        </authorList>
    </citation>
    <scope>NUCLEOTIDE SEQUENCE [LARGE SCALE MRNA]</scope>
    <source>
        <strain>SJD</strain>
    </source>
</reference>
<name>ADA2_DANRE</name>
<gene>
    <name evidence="2" type="primary">ada2a</name>
    <name type="synonym">cecr1</name>
    <name type="synonym">cecr1a</name>
</gene>
<accession>P58781</accession>
<accession>Q7ZVJ3</accession>
<accession>Q8UVU4</accession>
<proteinExistence type="evidence at transcript level"/>
<evidence type="ECO:0000250" key="1"/>
<evidence type="ECO:0000250" key="2">
    <source>
        <dbReference type="UniProtKB" id="Q9NZK5"/>
    </source>
</evidence>
<evidence type="ECO:0000255" key="3"/>
<evidence type="ECO:0000305" key="4"/>
<comment type="function">
    <text evidence="1">Adenosine deaminase that may contribute to the degradation of extracellular adenosine, a signaling molecule that controls a variety of cellular responses. May play a role in the regulation of cell proliferation (By similarity).</text>
</comment>
<comment type="catalytic activity">
    <reaction>
        <text>adenosine + H2O + H(+) = inosine + NH4(+)</text>
        <dbReference type="Rhea" id="RHEA:24408"/>
        <dbReference type="ChEBI" id="CHEBI:15377"/>
        <dbReference type="ChEBI" id="CHEBI:15378"/>
        <dbReference type="ChEBI" id="CHEBI:16335"/>
        <dbReference type="ChEBI" id="CHEBI:17596"/>
        <dbReference type="ChEBI" id="CHEBI:28938"/>
        <dbReference type="EC" id="3.5.4.4"/>
    </reaction>
</comment>
<comment type="cofactor">
    <cofactor evidence="1">
        <name>Zn(2+)</name>
        <dbReference type="ChEBI" id="CHEBI:29105"/>
    </cofactor>
    <text evidence="1">Binds 1 zinc ion per subunit.</text>
</comment>
<comment type="subcellular location">
    <subcellularLocation>
        <location evidence="4">Secreted</location>
    </subcellularLocation>
</comment>
<comment type="similarity">
    <text evidence="4">Belongs to the metallo-dependent hydrolases superfamily. Adenosine and AMP deaminases family. ADGF subfamily.</text>
</comment>